<sequence length="100" mass="10802">MLSTRFVTLAILACLLVVLGLARGAGGDPGVKQRIDVAREEERRDFWHAACSGHGFPITTPSTAAILFYVSLLAVGVAVACQAYRAVLRIVTLEMLQHLH</sequence>
<name>GN_EHV1V</name>
<reference evidence="2 3" key="1">
    <citation type="submission" date="2003-11" db="EMBL/GenBank/DDBJ databases">
        <authorList>
            <person name="Davis-Poynter N."/>
            <person name="Nugent J."/>
            <person name="Birch-Machin I."/>
            <person name="Allen G.P."/>
        </authorList>
    </citation>
    <scope>NUCLEOTIDE SEQUENCE [LARGE SCALE GENOMIC DNA]</scope>
</reference>
<proteinExistence type="inferred from homology"/>
<protein>
    <recommendedName>
        <fullName evidence="1">Envelope glycoprotein N</fullName>
    </recommendedName>
</protein>
<comment type="function">
    <text evidence="1">Envelope glycoprotein necessary for proper maturation of gM and modulation of its membrane fusion activity. Also plays a critical role in virion morphogenesis.</text>
</comment>
<comment type="subunit">
    <text evidence="1">Interacts (via N-terminus) with gM (via N-terminus). The gM-gN heterodimer forms the gCII complex.</text>
</comment>
<comment type="subcellular location">
    <subcellularLocation>
        <location evidence="1">Virion membrane</location>
        <topology evidence="1">Single-pass type I membrane protein</topology>
    </subcellularLocation>
    <subcellularLocation>
        <location evidence="1">Host membrane</location>
        <topology evidence="1">Single-pass type I membrane protein</topology>
    </subcellularLocation>
    <subcellularLocation>
        <location evidence="1">Host Golgi apparatus</location>
        <location evidence="1">Host trans-Golgi network</location>
    </subcellularLocation>
    <text evidence="1">When coexpressed with gM, localizes in the host trans-Golgi network.</text>
</comment>
<comment type="similarity">
    <text evidence="1">Belongs to the herpesviridae glycoprotein N family.</text>
</comment>
<dbReference type="EMBL" id="AY464052">
    <property type="protein sequence ID" value="AAS45894.1"/>
    <property type="molecule type" value="Genomic_DNA"/>
</dbReference>
<dbReference type="SMR" id="P84449"/>
<dbReference type="KEGG" id="vg:1487565"/>
<dbReference type="Proteomes" id="UP000008296">
    <property type="component" value="Segment"/>
</dbReference>
<dbReference type="GO" id="GO:0044177">
    <property type="term" value="C:host cell Golgi apparatus"/>
    <property type="evidence" value="ECO:0007669"/>
    <property type="project" value="UniProtKB-SubCell"/>
</dbReference>
<dbReference type="GO" id="GO:0033644">
    <property type="term" value="C:host cell membrane"/>
    <property type="evidence" value="ECO:0007669"/>
    <property type="project" value="UniProtKB-SubCell"/>
</dbReference>
<dbReference type="GO" id="GO:0016020">
    <property type="term" value="C:membrane"/>
    <property type="evidence" value="ECO:0007669"/>
    <property type="project" value="UniProtKB-KW"/>
</dbReference>
<dbReference type="GO" id="GO:0019031">
    <property type="term" value="C:viral envelope"/>
    <property type="evidence" value="ECO:0007669"/>
    <property type="project" value="UniProtKB-KW"/>
</dbReference>
<dbReference type="GO" id="GO:0055036">
    <property type="term" value="C:virion membrane"/>
    <property type="evidence" value="ECO:0007669"/>
    <property type="project" value="UniProtKB-SubCell"/>
</dbReference>
<dbReference type="HAMAP" id="MF_04037">
    <property type="entry name" value="HSV_GN"/>
    <property type="match status" value="1"/>
</dbReference>
<dbReference type="InterPro" id="IPR008647">
    <property type="entry name" value="GN_domain"/>
</dbReference>
<dbReference type="InterPro" id="IPR034707">
    <property type="entry name" value="HSV_GN"/>
</dbReference>
<dbReference type="Pfam" id="PF05702">
    <property type="entry name" value="Herpes_UL49_5"/>
    <property type="match status" value="1"/>
</dbReference>
<gene>
    <name evidence="1" type="primary">gN</name>
    <name type="ordered locus">10</name>
</gene>
<accession>P84449</accession>
<accession>Q6S6R1</accession>
<organismHost>
    <name type="scientific">Equus caballus</name>
    <name type="common">Horse</name>
    <dbReference type="NCBI Taxonomy" id="9796"/>
</organismHost>
<feature type="signal peptide" evidence="1">
    <location>
        <begin position="1"/>
        <end position="27"/>
    </location>
</feature>
<feature type="chain" id="PRO_0000116164" description="Envelope glycoprotein N" evidence="1">
    <location>
        <begin position="28"/>
        <end position="100"/>
    </location>
</feature>
<feature type="topological domain" description="Virion surface" evidence="1">
    <location>
        <begin position="28"/>
        <end position="63"/>
    </location>
</feature>
<feature type="transmembrane region" description="Helical" evidence="1">
    <location>
        <begin position="64"/>
        <end position="84"/>
    </location>
</feature>
<feature type="topological domain" description="Intravirion" evidence="1">
    <location>
        <begin position="85"/>
        <end position="100"/>
    </location>
</feature>
<feature type="disulfide bond" description="Interchain (with gM)" evidence="1">
    <location>
        <position position="51"/>
    </location>
</feature>
<organism>
    <name type="scientific">Equine herpesvirus 1 (strain V592)</name>
    <name type="common">EHV-1</name>
    <name type="synonym">Equine abortion virus</name>
    <dbReference type="NCBI Taxonomy" id="310273"/>
    <lineage>
        <taxon>Viruses</taxon>
        <taxon>Duplodnaviria</taxon>
        <taxon>Heunggongvirae</taxon>
        <taxon>Peploviricota</taxon>
        <taxon>Herviviricetes</taxon>
        <taxon>Herpesvirales</taxon>
        <taxon>Orthoherpesviridae</taxon>
        <taxon>Alphaherpesvirinae</taxon>
        <taxon>Varicellovirus</taxon>
        <taxon>Varicellovirus equidalpha1</taxon>
        <taxon>Equid alphaherpesvirus 1</taxon>
    </lineage>
</organism>
<keyword id="KW-1015">Disulfide bond</keyword>
<keyword id="KW-1040">Host Golgi apparatus</keyword>
<keyword id="KW-1043">Host membrane</keyword>
<keyword id="KW-0472">Membrane</keyword>
<keyword id="KW-0732">Signal</keyword>
<keyword id="KW-0812">Transmembrane</keyword>
<keyword id="KW-1133">Transmembrane helix</keyword>
<keyword id="KW-0261">Viral envelope protein</keyword>
<keyword id="KW-0946">Virion</keyword>
<evidence type="ECO:0000255" key="1">
    <source>
        <dbReference type="HAMAP-Rule" id="MF_04037"/>
    </source>
</evidence>
<evidence type="ECO:0000305" key="2"/>
<evidence type="ECO:0000312" key="3">
    <source>
        <dbReference type="EMBL" id="AAS45894.1"/>
    </source>
</evidence>